<dbReference type="EC" id="7.-.-.-" evidence="2"/>
<dbReference type="EMBL" id="DS231670">
    <property type="protein sequence ID" value="ESU17847.1"/>
    <property type="molecule type" value="Genomic_DNA"/>
</dbReference>
<dbReference type="EMBL" id="HG970334">
    <property type="protein sequence ID" value="SCB64970.1"/>
    <property type="status" value="ALT_INIT"/>
    <property type="molecule type" value="Genomic_DNA"/>
</dbReference>
<dbReference type="RefSeq" id="XP_011325469.1">
    <property type="nucleotide sequence ID" value="XM_011327167.1"/>
</dbReference>
<dbReference type="SMR" id="Q4HVU7"/>
<dbReference type="FunCoup" id="Q4HVU7">
    <property type="interactions" value="688"/>
</dbReference>
<dbReference type="STRING" id="229533.Q4HVU7"/>
<dbReference type="GeneID" id="23557791"/>
<dbReference type="KEGG" id="fgr:FGSG_10911"/>
<dbReference type="eggNOG" id="KOG0057">
    <property type="taxonomic scope" value="Eukaryota"/>
</dbReference>
<dbReference type="HOGENOM" id="CLU_000604_84_1_1"/>
<dbReference type="InParanoid" id="Q4HVU7"/>
<dbReference type="OrthoDB" id="88924at110618"/>
<dbReference type="Proteomes" id="UP000070720">
    <property type="component" value="Chromosome 3"/>
</dbReference>
<dbReference type="GO" id="GO:0005743">
    <property type="term" value="C:mitochondrial inner membrane"/>
    <property type="evidence" value="ECO:0007669"/>
    <property type="project" value="UniProtKB-SubCell"/>
</dbReference>
<dbReference type="GO" id="GO:0140359">
    <property type="term" value="F:ABC-type transporter activity"/>
    <property type="evidence" value="ECO:0007669"/>
    <property type="project" value="InterPro"/>
</dbReference>
<dbReference type="GO" id="GO:0005524">
    <property type="term" value="F:ATP binding"/>
    <property type="evidence" value="ECO:0007669"/>
    <property type="project" value="UniProtKB-KW"/>
</dbReference>
<dbReference type="GO" id="GO:0016887">
    <property type="term" value="F:ATP hydrolysis activity"/>
    <property type="evidence" value="ECO:0007669"/>
    <property type="project" value="InterPro"/>
</dbReference>
<dbReference type="GO" id="GO:0006879">
    <property type="term" value="P:intracellular iron ion homeostasis"/>
    <property type="evidence" value="ECO:0007669"/>
    <property type="project" value="TreeGrafter"/>
</dbReference>
<dbReference type="CDD" id="cd18582">
    <property type="entry name" value="ABC_6TM_ATM1_ABCB7"/>
    <property type="match status" value="1"/>
</dbReference>
<dbReference type="CDD" id="cd03253">
    <property type="entry name" value="ABCC_ATM1_transporter"/>
    <property type="match status" value="1"/>
</dbReference>
<dbReference type="FunFam" id="1.20.1560.10:FF:000004">
    <property type="entry name" value="ATP-binding cassette sub-family B member 7"/>
    <property type="match status" value="1"/>
</dbReference>
<dbReference type="FunFam" id="3.40.50.300:FF:000186">
    <property type="entry name" value="ATP-binding cassette sub-family B member 7, mitochondrial"/>
    <property type="match status" value="1"/>
</dbReference>
<dbReference type="Gene3D" id="1.20.1560.10">
    <property type="entry name" value="ABC transporter type 1, transmembrane domain"/>
    <property type="match status" value="1"/>
</dbReference>
<dbReference type="Gene3D" id="3.40.50.300">
    <property type="entry name" value="P-loop containing nucleotide triphosphate hydrolases"/>
    <property type="match status" value="1"/>
</dbReference>
<dbReference type="InterPro" id="IPR003593">
    <property type="entry name" value="AAA+_ATPase"/>
</dbReference>
<dbReference type="InterPro" id="IPR011527">
    <property type="entry name" value="ABC1_TM_dom"/>
</dbReference>
<dbReference type="InterPro" id="IPR036640">
    <property type="entry name" value="ABC1_TM_sf"/>
</dbReference>
<dbReference type="InterPro" id="IPR003439">
    <property type="entry name" value="ABC_transporter-like_ATP-bd"/>
</dbReference>
<dbReference type="InterPro" id="IPR017871">
    <property type="entry name" value="ABC_transporter-like_CS"/>
</dbReference>
<dbReference type="InterPro" id="IPR027417">
    <property type="entry name" value="P-loop_NTPase"/>
</dbReference>
<dbReference type="InterPro" id="IPR039421">
    <property type="entry name" value="Type_1_exporter"/>
</dbReference>
<dbReference type="PANTHER" id="PTHR24221">
    <property type="entry name" value="ATP-BINDING CASSETTE SUB-FAMILY B"/>
    <property type="match status" value="1"/>
</dbReference>
<dbReference type="PANTHER" id="PTHR24221:SF402">
    <property type="entry name" value="IRON-SULFUR CLUSTERS TRANSPORTER ABCB7, MITOCHONDRIAL"/>
    <property type="match status" value="1"/>
</dbReference>
<dbReference type="Pfam" id="PF00664">
    <property type="entry name" value="ABC_membrane"/>
    <property type="match status" value="1"/>
</dbReference>
<dbReference type="Pfam" id="PF00005">
    <property type="entry name" value="ABC_tran"/>
    <property type="match status" value="1"/>
</dbReference>
<dbReference type="SMART" id="SM00382">
    <property type="entry name" value="AAA"/>
    <property type="match status" value="1"/>
</dbReference>
<dbReference type="SUPFAM" id="SSF90123">
    <property type="entry name" value="ABC transporter transmembrane region"/>
    <property type="match status" value="1"/>
</dbReference>
<dbReference type="SUPFAM" id="SSF52540">
    <property type="entry name" value="P-loop containing nucleoside triphosphate hydrolases"/>
    <property type="match status" value="1"/>
</dbReference>
<dbReference type="PROSITE" id="PS50929">
    <property type="entry name" value="ABC_TM1F"/>
    <property type="match status" value="1"/>
</dbReference>
<dbReference type="PROSITE" id="PS00211">
    <property type="entry name" value="ABC_TRANSPORTER_1"/>
    <property type="match status" value="1"/>
</dbReference>
<dbReference type="PROSITE" id="PS50893">
    <property type="entry name" value="ABC_TRANSPORTER_2"/>
    <property type="match status" value="1"/>
</dbReference>
<gene>
    <name evidence="8" type="primary">ATM1</name>
    <name type="ORF">FGRAMPH1_01T20779</name>
    <name type="ORF">FGRRES_10911_M</name>
    <name type="ORF">FGSG_10911</name>
</gene>
<accession>Q4HVU7</accession>
<accession>A0A098DZA1</accession>
<accession>A0A0E0SJU1</accession>
<accession>A0A1C3YKA1</accession>
<accession>A0A1I9FV75</accession>
<accession>V6RV02</accession>
<sequence length="698" mass="77443">MIPQLLQRSSRACPRYNPALYRLSTTSQQRPGLTQTFWTSAPRREQPRTPTDSKPTTTKPSAVFPANKKATKQNDPLVTVEKSAPEQRKADWAIMKEMTRYLWPKDDWGTKLRVSLAVSLLIGAKVLNVQVPFYFKSIVDSMNIDVAAVGGTATTVAGAMILAYGASRIGATVFQELRNAVFASVAQNAIRKVACNVFDHLLRLDLTFHLSKQTGGLTRALDRGTKGISFILSSMVFHVLPTALEISMVCGILTYNYGAKFAALTVLTMVSYTAFTIWTTAWRTKFRRQANAADNKASTVAVDSLINYEAVKYFNNEKFEVARYDKALGQYEKNSIKVATSLALLNSGQNIIFSSALTGMMYLAANGVAEGTLTVGDLVMVNQLVFQLSVPLNFLGSVYRELRQSLLDMETLFNLQKVNANIKEKAGAKPLVLSKGGEIKFENVNFAYHPNRPILRDLSLTIPAGKKVAVVGPSGCGKSTLLRLLFRSYDVQGGRVLIDDQDIRDVDLESLRRSIGVVPQDTPLFNDTVEHNIRYGSINATHEEVVAVAKRAHVHNTIQSFPDGYETKVGERGLMISGGEKQRLAVSRILLKDPPLLFFDEATSALDTHTEQALMMNINSILRERGRTSVFVAHRLRTIFDSDLIIVLKEGHVAEMGTHRELIDRDGVYAELWSAQETMFGEDGKEKSEEENDEQKKN</sequence>
<evidence type="ECO:0000250" key="1">
    <source>
        <dbReference type="UniProtKB" id="P40416"/>
    </source>
</evidence>
<evidence type="ECO:0000250" key="2">
    <source>
        <dbReference type="UniProtKB" id="Q2G506"/>
    </source>
</evidence>
<evidence type="ECO:0000250" key="3">
    <source>
        <dbReference type="UniProtKB" id="Q9NP58"/>
    </source>
</evidence>
<evidence type="ECO:0000255" key="4"/>
<evidence type="ECO:0000255" key="5">
    <source>
        <dbReference type="PROSITE-ProRule" id="PRU00434"/>
    </source>
</evidence>
<evidence type="ECO:0000255" key="6">
    <source>
        <dbReference type="PROSITE-ProRule" id="PRU00441"/>
    </source>
</evidence>
<evidence type="ECO:0000256" key="7">
    <source>
        <dbReference type="SAM" id="MobiDB-lite"/>
    </source>
</evidence>
<evidence type="ECO:0000305" key="8"/>
<keyword id="KW-0067">ATP-binding</keyword>
<keyword id="KW-0472">Membrane</keyword>
<keyword id="KW-0496">Mitochondrion</keyword>
<keyword id="KW-0999">Mitochondrion inner membrane</keyword>
<keyword id="KW-0547">Nucleotide-binding</keyword>
<keyword id="KW-1185">Reference proteome</keyword>
<keyword id="KW-0809">Transit peptide</keyword>
<keyword id="KW-1278">Translocase</keyword>
<keyword id="KW-0812">Transmembrane</keyword>
<keyword id="KW-1133">Transmembrane helix</keyword>
<keyword id="KW-0813">Transport</keyword>
<organism>
    <name type="scientific">Gibberella zeae (strain ATCC MYA-4620 / CBS 123657 / FGSC 9075 / NRRL 31084 / PH-1)</name>
    <name type="common">Wheat head blight fungus</name>
    <name type="synonym">Fusarium graminearum</name>
    <dbReference type="NCBI Taxonomy" id="229533"/>
    <lineage>
        <taxon>Eukaryota</taxon>
        <taxon>Fungi</taxon>
        <taxon>Dikarya</taxon>
        <taxon>Ascomycota</taxon>
        <taxon>Pezizomycotina</taxon>
        <taxon>Sordariomycetes</taxon>
        <taxon>Hypocreomycetidae</taxon>
        <taxon>Hypocreales</taxon>
        <taxon>Nectriaceae</taxon>
        <taxon>Fusarium</taxon>
    </lineage>
</organism>
<name>ATM1_GIBZE</name>
<comment type="function">
    <text evidence="1">Performs an essential function in the generation of cytoplasmic iron-sulfur proteins by mediating the ATP-dependent export of Fe/S cluster precursors synthesized by NFS1 and other mitochondrial proteins (By similarity). Hydrolyzes ATP (By similarity). Binds glutathione and may function by transporting a glutathione-conjugated iron-sulfur compound (By similarity).</text>
</comment>
<comment type="subunit">
    <text evidence="1">Homodimer.</text>
</comment>
<comment type="subcellular location">
    <subcellularLocation>
        <location evidence="1">Mitochondrion inner membrane</location>
        <topology evidence="6">Multi-pass membrane protein</topology>
    </subcellularLocation>
</comment>
<comment type="similarity">
    <text evidence="8">Belongs to the ABC transporter superfamily. ABCB family. Heavy Metal importer (TC 3.A.1.210) subfamily.</text>
</comment>
<comment type="sequence caution" evidence="8">
    <conflict type="erroneous initiation">
        <sequence resource="EMBL-CDS" id="SCB64970"/>
    </conflict>
    <text>Truncated N-terminus.</text>
</comment>
<protein>
    <recommendedName>
        <fullName evidence="8">Iron-sulfur clusters transporter ATM1, mitochondrial</fullName>
        <ecNumber evidence="2">7.-.-.-</ecNumber>
    </recommendedName>
</protein>
<reference key="1">
    <citation type="journal article" date="2007" name="Science">
        <title>The Fusarium graminearum genome reveals a link between localized polymorphism and pathogen specialization.</title>
        <authorList>
            <person name="Cuomo C.A."/>
            <person name="Gueldener U."/>
            <person name="Xu J.-R."/>
            <person name="Trail F."/>
            <person name="Turgeon B.G."/>
            <person name="Di Pietro A."/>
            <person name="Walton J.D."/>
            <person name="Ma L.-J."/>
            <person name="Baker S.E."/>
            <person name="Rep M."/>
            <person name="Adam G."/>
            <person name="Antoniw J."/>
            <person name="Baldwin T."/>
            <person name="Calvo S.E."/>
            <person name="Chang Y.-L."/>
            <person name="DeCaprio D."/>
            <person name="Gale L.R."/>
            <person name="Gnerre S."/>
            <person name="Goswami R.S."/>
            <person name="Hammond-Kosack K."/>
            <person name="Harris L.J."/>
            <person name="Hilburn K."/>
            <person name="Kennell J.C."/>
            <person name="Kroken S."/>
            <person name="Magnuson J.K."/>
            <person name="Mannhaupt G."/>
            <person name="Mauceli E.W."/>
            <person name="Mewes H.-W."/>
            <person name="Mitterbauer R."/>
            <person name="Muehlbauer G."/>
            <person name="Muensterkoetter M."/>
            <person name="Nelson D."/>
            <person name="O'Donnell K."/>
            <person name="Ouellet T."/>
            <person name="Qi W."/>
            <person name="Quesneville H."/>
            <person name="Roncero M.I.G."/>
            <person name="Seong K.-Y."/>
            <person name="Tetko I.V."/>
            <person name="Urban M."/>
            <person name="Waalwijk C."/>
            <person name="Ward T.J."/>
            <person name="Yao J."/>
            <person name="Birren B.W."/>
            <person name="Kistler H.C."/>
        </authorList>
    </citation>
    <scope>NUCLEOTIDE SEQUENCE [LARGE SCALE GENOMIC DNA]</scope>
    <source>
        <strain>ATCC MYA-4620 / CBS 123657 / FGSC 9075 / NRRL 31084 / PH-1</strain>
    </source>
</reference>
<reference key="2">
    <citation type="journal article" date="2010" name="Nature">
        <title>Comparative genomics reveals mobile pathogenicity chromosomes in Fusarium.</title>
        <authorList>
            <person name="Ma L.-J."/>
            <person name="van der Does H.C."/>
            <person name="Borkovich K.A."/>
            <person name="Coleman J.J."/>
            <person name="Daboussi M.-J."/>
            <person name="Di Pietro A."/>
            <person name="Dufresne M."/>
            <person name="Freitag M."/>
            <person name="Grabherr M."/>
            <person name="Henrissat B."/>
            <person name="Houterman P.M."/>
            <person name="Kang S."/>
            <person name="Shim W.-B."/>
            <person name="Woloshuk C."/>
            <person name="Xie X."/>
            <person name="Xu J.-R."/>
            <person name="Antoniw J."/>
            <person name="Baker S.E."/>
            <person name="Bluhm B.H."/>
            <person name="Breakspear A."/>
            <person name="Brown D.W."/>
            <person name="Butchko R.A.E."/>
            <person name="Chapman S."/>
            <person name="Coulson R."/>
            <person name="Coutinho P.M."/>
            <person name="Danchin E.G.J."/>
            <person name="Diener A."/>
            <person name="Gale L.R."/>
            <person name="Gardiner D.M."/>
            <person name="Goff S."/>
            <person name="Hammond-Kosack K.E."/>
            <person name="Hilburn K."/>
            <person name="Hua-Van A."/>
            <person name="Jonkers W."/>
            <person name="Kazan K."/>
            <person name="Kodira C.D."/>
            <person name="Koehrsen M."/>
            <person name="Kumar L."/>
            <person name="Lee Y.-H."/>
            <person name="Li L."/>
            <person name="Manners J.M."/>
            <person name="Miranda-Saavedra D."/>
            <person name="Mukherjee M."/>
            <person name="Park G."/>
            <person name="Park J."/>
            <person name="Park S.-Y."/>
            <person name="Proctor R.H."/>
            <person name="Regev A."/>
            <person name="Ruiz-Roldan M.C."/>
            <person name="Sain D."/>
            <person name="Sakthikumar S."/>
            <person name="Sykes S."/>
            <person name="Schwartz D.C."/>
            <person name="Turgeon B.G."/>
            <person name="Wapinski I."/>
            <person name="Yoder O."/>
            <person name="Young S."/>
            <person name="Zeng Q."/>
            <person name="Zhou S."/>
            <person name="Galagan J."/>
            <person name="Cuomo C.A."/>
            <person name="Kistler H.C."/>
            <person name="Rep M."/>
        </authorList>
    </citation>
    <scope>GENOME REANNOTATION</scope>
    <source>
        <strain>ATCC MYA-4620 / CBS 123657 / FGSC 9075 / NRRL 31084 / PH-1</strain>
    </source>
</reference>
<reference key="3">
    <citation type="journal article" date="2015" name="BMC Genomics">
        <title>The completed genome sequence of the pathogenic ascomycete fungus Fusarium graminearum.</title>
        <authorList>
            <person name="King R."/>
            <person name="Urban M."/>
            <person name="Hammond-Kosack M.C.U."/>
            <person name="Hassani-Pak K."/>
            <person name="Hammond-Kosack K.E."/>
        </authorList>
    </citation>
    <scope>NUCLEOTIDE SEQUENCE [LARGE SCALE GENOMIC DNA]</scope>
    <source>
        <strain>ATCC MYA-4620 / CBS 123657 / FGSC 9075 / NRRL 31084 / PH-1</strain>
    </source>
</reference>
<feature type="transit peptide" description="Mitochondrion" evidence="4">
    <location>
        <begin position="1"/>
        <end position="23"/>
    </location>
</feature>
<feature type="chain" id="PRO_0000255446" description="Iron-sulfur clusters transporter ATM1, mitochondrial">
    <location>
        <begin position="24"/>
        <end position="698"/>
    </location>
</feature>
<feature type="topological domain" description="Mitochondrial matrix" evidence="1">
    <location>
        <begin position="24"/>
        <end position="113"/>
    </location>
</feature>
<feature type="transmembrane region" description="Helical" evidence="6">
    <location>
        <begin position="114"/>
        <end position="135"/>
    </location>
</feature>
<feature type="topological domain" description="Mitochondrial intermembrane" evidence="1">
    <location>
        <begin position="136"/>
        <end position="158"/>
    </location>
</feature>
<feature type="transmembrane region" description="Helical" evidence="6">
    <location>
        <begin position="159"/>
        <end position="182"/>
    </location>
</feature>
<feature type="topological domain" description="Mitochondrial matrix" evidence="1">
    <location>
        <begin position="183"/>
        <end position="231"/>
    </location>
</feature>
<feature type="transmembrane region" description="Helical" evidence="6">
    <location>
        <begin position="232"/>
        <end position="255"/>
    </location>
</feature>
<feature type="topological domain" description="Mitochondrial intermembrane" evidence="1">
    <location>
        <position position="256"/>
    </location>
</feature>
<feature type="transmembrane region" description="Helical" evidence="6">
    <location>
        <begin position="257"/>
        <end position="277"/>
    </location>
</feature>
<feature type="topological domain" description="Mitochondrial matrix" evidence="1">
    <location>
        <begin position="278"/>
        <end position="343"/>
    </location>
</feature>
<feature type="transmembrane region" description="Helical" evidence="6">
    <location>
        <begin position="344"/>
        <end position="362"/>
    </location>
</feature>
<feature type="topological domain" description="Mitochondrial intermembrane" evidence="1">
    <location>
        <begin position="363"/>
        <end position="377"/>
    </location>
</feature>
<feature type="transmembrane region" description="Helical" evidence="6">
    <location>
        <begin position="378"/>
        <end position="399"/>
    </location>
</feature>
<feature type="topological domain" description="Mitochondrial matrix" evidence="1">
    <location>
        <begin position="400"/>
        <end position="698"/>
    </location>
</feature>
<feature type="domain" description="ABC transmembrane type-1" evidence="6">
    <location>
        <begin position="114"/>
        <end position="404"/>
    </location>
</feature>
<feature type="domain" description="ABC transporter" evidence="5">
    <location>
        <begin position="439"/>
        <end position="675"/>
    </location>
</feature>
<feature type="region of interest" description="Disordered" evidence="7">
    <location>
        <begin position="32"/>
        <end position="63"/>
    </location>
</feature>
<feature type="region of interest" description="Disordered" evidence="7">
    <location>
        <begin position="679"/>
        <end position="698"/>
    </location>
</feature>
<feature type="compositionally biased region" description="Low complexity" evidence="7">
    <location>
        <begin position="48"/>
        <end position="61"/>
    </location>
</feature>
<feature type="compositionally biased region" description="Basic and acidic residues" evidence="7">
    <location>
        <begin position="682"/>
        <end position="698"/>
    </location>
</feature>
<feature type="binding site" evidence="1">
    <location>
        <begin position="283"/>
        <end position="287"/>
    </location>
    <ligand>
        <name>glutathione</name>
        <dbReference type="ChEBI" id="CHEBI:57925"/>
    </ligand>
</feature>
<feature type="binding site" evidence="1">
    <location>
        <begin position="346"/>
        <end position="349"/>
    </location>
    <ligand>
        <name>glutathione</name>
        <dbReference type="ChEBI" id="CHEBI:57925"/>
    </ligand>
</feature>
<feature type="binding site" evidence="2">
    <location>
        <position position="396"/>
    </location>
    <ligand>
        <name>glutathione</name>
        <dbReference type="ChEBI" id="CHEBI:57925"/>
    </ligand>
</feature>
<feature type="binding site" evidence="3">
    <location>
        <position position="448"/>
    </location>
    <ligand>
        <name>ATP</name>
        <dbReference type="ChEBI" id="CHEBI:30616"/>
    </ligand>
</feature>
<feature type="binding site" evidence="5">
    <location>
        <begin position="472"/>
        <end position="483"/>
    </location>
    <ligand>
        <name>ATP</name>
        <dbReference type="ChEBI" id="CHEBI:30616"/>
    </ligand>
</feature>
<proteinExistence type="inferred from homology"/>